<protein>
    <recommendedName>
        <fullName evidence="1">Small ribosomal subunit protein uS2</fullName>
    </recommendedName>
    <alternativeName>
        <fullName evidence="2">30S ribosomal protein S2</fullName>
    </alternativeName>
</protein>
<reference key="1">
    <citation type="submission" date="2006-03" db="EMBL/GenBank/DDBJ databases">
        <title>Complete sequence of chromosome of Nitrobacter hamburgensis X14.</title>
        <authorList>
            <consortium name="US DOE Joint Genome Institute"/>
            <person name="Copeland A."/>
            <person name="Lucas S."/>
            <person name="Lapidus A."/>
            <person name="Barry K."/>
            <person name="Detter J.C."/>
            <person name="Glavina del Rio T."/>
            <person name="Hammon N."/>
            <person name="Israni S."/>
            <person name="Dalin E."/>
            <person name="Tice H."/>
            <person name="Pitluck S."/>
            <person name="Chain P."/>
            <person name="Malfatti S."/>
            <person name="Shin M."/>
            <person name="Vergez L."/>
            <person name="Schmutz J."/>
            <person name="Larimer F."/>
            <person name="Land M."/>
            <person name="Hauser L."/>
            <person name="Kyrpides N."/>
            <person name="Ivanova N."/>
            <person name="Ward B."/>
            <person name="Arp D."/>
            <person name="Klotz M."/>
            <person name="Stein L."/>
            <person name="O'Mullan G."/>
            <person name="Starkenburg S."/>
            <person name="Sayavedra L."/>
            <person name="Poret-Peterson A.T."/>
            <person name="Gentry M.E."/>
            <person name="Bruce D."/>
            <person name="Richardson P."/>
        </authorList>
    </citation>
    <scope>NUCLEOTIDE SEQUENCE [LARGE SCALE GENOMIC DNA]</scope>
    <source>
        <strain>DSM 10229 / NCIMB 13809 / X14</strain>
    </source>
</reference>
<evidence type="ECO:0000255" key="1">
    <source>
        <dbReference type="HAMAP-Rule" id="MF_00291"/>
    </source>
</evidence>
<evidence type="ECO:0000305" key="2"/>
<proteinExistence type="inferred from homology"/>
<feature type="chain" id="PRO_1000004007" description="Small ribosomal subunit protein uS2">
    <location>
        <begin position="1"/>
        <end position="332"/>
    </location>
</feature>
<name>RS2_NITHX</name>
<comment type="similarity">
    <text evidence="1">Belongs to the universal ribosomal protein uS2 family.</text>
</comment>
<accession>Q1QMN7</accession>
<dbReference type="EMBL" id="CP000319">
    <property type="protein sequence ID" value="ABE62510.1"/>
    <property type="molecule type" value="Genomic_DNA"/>
</dbReference>
<dbReference type="RefSeq" id="WP_011510192.1">
    <property type="nucleotide sequence ID" value="NC_007964.1"/>
</dbReference>
<dbReference type="SMR" id="Q1QMN7"/>
<dbReference type="STRING" id="323097.Nham_1694"/>
<dbReference type="KEGG" id="nha:Nham_1694"/>
<dbReference type="eggNOG" id="COG0052">
    <property type="taxonomic scope" value="Bacteria"/>
</dbReference>
<dbReference type="HOGENOM" id="CLU_040318_2_1_5"/>
<dbReference type="OrthoDB" id="9808036at2"/>
<dbReference type="Proteomes" id="UP000001953">
    <property type="component" value="Chromosome"/>
</dbReference>
<dbReference type="GO" id="GO:0022627">
    <property type="term" value="C:cytosolic small ribosomal subunit"/>
    <property type="evidence" value="ECO:0007669"/>
    <property type="project" value="TreeGrafter"/>
</dbReference>
<dbReference type="GO" id="GO:0003735">
    <property type="term" value="F:structural constituent of ribosome"/>
    <property type="evidence" value="ECO:0007669"/>
    <property type="project" value="InterPro"/>
</dbReference>
<dbReference type="GO" id="GO:0006412">
    <property type="term" value="P:translation"/>
    <property type="evidence" value="ECO:0007669"/>
    <property type="project" value="UniProtKB-UniRule"/>
</dbReference>
<dbReference type="CDD" id="cd01425">
    <property type="entry name" value="RPS2"/>
    <property type="match status" value="1"/>
</dbReference>
<dbReference type="FunFam" id="1.10.287.610:FF:000004">
    <property type="entry name" value="30S ribosomal protein S2"/>
    <property type="match status" value="1"/>
</dbReference>
<dbReference type="Gene3D" id="3.40.50.10490">
    <property type="entry name" value="Glucose-6-phosphate isomerase like protein, domain 1"/>
    <property type="match status" value="1"/>
</dbReference>
<dbReference type="Gene3D" id="1.10.287.610">
    <property type="entry name" value="Helix hairpin bin"/>
    <property type="match status" value="1"/>
</dbReference>
<dbReference type="HAMAP" id="MF_00291_B">
    <property type="entry name" value="Ribosomal_uS2_B"/>
    <property type="match status" value="1"/>
</dbReference>
<dbReference type="InterPro" id="IPR001865">
    <property type="entry name" value="Ribosomal_uS2"/>
</dbReference>
<dbReference type="InterPro" id="IPR005706">
    <property type="entry name" value="Ribosomal_uS2_bac/mit/plastid"/>
</dbReference>
<dbReference type="InterPro" id="IPR018130">
    <property type="entry name" value="Ribosomal_uS2_CS"/>
</dbReference>
<dbReference type="InterPro" id="IPR023591">
    <property type="entry name" value="Ribosomal_uS2_flav_dom_sf"/>
</dbReference>
<dbReference type="NCBIfam" id="NF008966">
    <property type="entry name" value="PRK12311.1"/>
    <property type="match status" value="1"/>
</dbReference>
<dbReference type="NCBIfam" id="TIGR01011">
    <property type="entry name" value="rpsB_bact"/>
    <property type="match status" value="1"/>
</dbReference>
<dbReference type="PANTHER" id="PTHR12534">
    <property type="entry name" value="30S RIBOSOMAL PROTEIN S2 PROKARYOTIC AND ORGANELLAR"/>
    <property type="match status" value="1"/>
</dbReference>
<dbReference type="PANTHER" id="PTHR12534:SF0">
    <property type="entry name" value="SMALL RIBOSOMAL SUBUNIT PROTEIN US2M"/>
    <property type="match status" value="1"/>
</dbReference>
<dbReference type="Pfam" id="PF00318">
    <property type="entry name" value="Ribosomal_S2"/>
    <property type="match status" value="1"/>
</dbReference>
<dbReference type="PRINTS" id="PR00395">
    <property type="entry name" value="RIBOSOMALS2"/>
</dbReference>
<dbReference type="SUPFAM" id="SSF52313">
    <property type="entry name" value="Ribosomal protein S2"/>
    <property type="match status" value="1"/>
</dbReference>
<dbReference type="PROSITE" id="PS00962">
    <property type="entry name" value="RIBOSOMAL_S2_1"/>
    <property type="match status" value="1"/>
</dbReference>
<dbReference type="PROSITE" id="PS00963">
    <property type="entry name" value="RIBOSOMAL_S2_2"/>
    <property type="match status" value="1"/>
</dbReference>
<organism>
    <name type="scientific">Nitrobacter hamburgensis (strain DSM 10229 / NCIMB 13809 / X14)</name>
    <dbReference type="NCBI Taxonomy" id="323097"/>
    <lineage>
        <taxon>Bacteria</taxon>
        <taxon>Pseudomonadati</taxon>
        <taxon>Pseudomonadota</taxon>
        <taxon>Alphaproteobacteria</taxon>
        <taxon>Hyphomicrobiales</taxon>
        <taxon>Nitrobacteraceae</taxon>
        <taxon>Nitrobacter</taxon>
    </lineage>
</organism>
<gene>
    <name evidence="1" type="primary">rpsB</name>
    <name type="ordered locus">Nham_1694</name>
</gene>
<sequence length="332" mass="36068">MALPEFSMRQLLEAGVHFGHQSHRWNPKMADYIFGARNNIHIIDLAQTVPLLHRALQAVSDTVAKGGRILFVGTKRQAQDGVADAAKRSAQYFVNSRWLGGTLTNWKTISGSIKRLRHLDEVLSSGDANAYTKKERLTLQRERDKLDRSLGGIKDMGGLPDLIFVIDTNKEDIAIQEAQRLNIPVAAIVDTNCDPKGITYLVPGNDDAGRAISLYCDLIARAAIDGISRAQGDSGIDIGASVQPVQEELPAAAQPAGFQGLAGPRGVADDLKKLTGVSGEIEKKFNDLGIFHYWQLAEFDHETAHKIGEEVGLPSRADGWVAQAKALTAEAE</sequence>
<keyword id="KW-1185">Reference proteome</keyword>
<keyword id="KW-0687">Ribonucleoprotein</keyword>
<keyword id="KW-0689">Ribosomal protein</keyword>